<organism>
    <name type="scientific">Levilactobacillus brevis (strain ATCC 367 / BCRC 12310 / CIP 105137 / JCM 1170 / LMG 11437 / NCIMB 947 / NCTC 947)</name>
    <name type="common">Lactobacillus brevis</name>
    <dbReference type="NCBI Taxonomy" id="387344"/>
    <lineage>
        <taxon>Bacteria</taxon>
        <taxon>Bacillati</taxon>
        <taxon>Bacillota</taxon>
        <taxon>Bacilli</taxon>
        <taxon>Lactobacillales</taxon>
        <taxon>Lactobacillaceae</taxon>
        <taxon>Levilactobacillus</taxon>
    </lineage>
</organism>
<name>RL23_LEVBA</name>
<evidence type="ECO:0000255" key="1">
    <source>
        <dbReference type="HAMAP-Rule" id="MF_01369"/>
    </source>
</evidence>
<evidence type="ECO:0000305" key="2"/>
<dbReference type="EMBL" id="CP000416">
    <property type="protein sequence ID" value="ABJ64763.1"/>
    <property type="molecule type" value="Genomic_DNA"/>
</dbReference>
<dbReference type="RefSeq" id="WP_011668497.1">
    <property type="nucleotide sequence ID" value="NC_008497.1"/>
</dbReference>
<dbReference type="SMR" id="Q03PV9"/>
<dbReference type="STRING" id="387344.LVIS_1688"/>
<dbReference type="GeneID" id="56993549"/>
<dbReference type="KEGG" id="lbr:LVIS_1688"/>
<dbReference type="eggNOG" id="COG0089">
    <property type="taxonomic scope" value="Bacteria"/>
</dbReference>
<dbReference type="HOGENOM" id="CLU_037562_3_2_9"/>
<dbReference type="Proteomes" id="UP000001652">
    <property type="component" value="Chromosome"/>
</dbReference>
<dbReference type="GO" id="GO:1990904">
    <property type="term" value="C:ribonucleoprotein complex"/>
    <property type="evidence" value="ECO:0007669"/>
    <property type="project" value="UniProtKB-KW"/>
</dbReference>
<dbReference type="GO" id="GO:0005840">
    <property type="term" value="C:ribosome"/>
    <property type="evidence" value="ECO:0007669"/>
    <property type="project" value="UniProtKB-KW"/>
</dbReference>
<dbReference type="GO" id="GO:0019843">
    <property type="term" value="F:rRNA binding"/>
    <property type="evidence" value="ECO:0007669"/>
    <property type="project" value="UniProtKB-UniRule"/>
</dbReference>
<dbReference type="GO" id="GO:0003735">
    <property type="term" value="F:structural constituent of ribosome"/>
    <property type="evidence" value="ECO:0007669"/>
    <property type="project" value="InterPro"/>
</dbReference>
<dbReference type="GO" id="GO:0006412">
    <property type="term" value="P:translation"/>
    <property type="evidence" value="ECO:0007669"/>
    <property type="project" value="UniProtKB-UniRule"/>
</dbReference>
<dbReference type="FunFam" id="3.30.70.330:FF:000001">
    <property type="entry name" value="50S ribosomal protein L23"/>
    <property type="match status" value="1"/>
</dbReference>
<dbReference type="Gene3D" id="3.30.70.330">
    <property type="match status" value="1"/>
</dbReference>
<dbReference type="HAMAP" id="MF_01369_B">
    <property type="entry name" value="Ribosomal_uL23_B"/>
    <property type="match status" value="1"/>
</dbReference>
<dbReference type="InterPro" id="IPR012677">
    <property type="entry name" value="Nucleotide-bd_a/b_plait_sf"/>
</dbReference>
<dbReference type="InterPro" id="IPR013025">
    <property type="entry name" value="Ribosomal_uL23-like"/>
</dbReference>
<dbReference type="InterPro" id="IPR012678">
    <property type="entry name" value="Ribosomal_uL23/eL15/eS24_sf"/>
</dbReference>
<dbReference type="NCBIfam" id="NF004363">
    <property type="entry name" value="PRK05738.2-4"/>
    <property type="match status" value="1"/>
</dbReference>
<dbReference type="PANTHER" id="PTHR11620">
    <property type="entry name" value="60S RIBOSOMAL PROTEIN L23A"/>
    <property type="match status" value="1"/>
</dbReference>
<dbReference type="Pfam" id="PF00276">
    <property type="entry name" value="Ribosomal_L23"/>
    <property type="match status" value="1"/>
</dbReference>
<dbReference type="SUPFAM" id="SSF54189">
    <property type="entry name" value="Ribosomal proteins S24e, L23 and L15e"/>
    <property type="match status" value="1"/>
</dbReference>
<comment type="function">
    <text evidence="1">One of the early assembly proteins it binds 23S rRNA. One of the proteins that surrounds the polypeptide exit tunnel on the outside of the ribosome. Forms the main docking site for trigger factor binding to the ribosome.</text>
</comment>
<comment type="subunit">
    <text evidence="1">Part of the 50S ribosomal subunit. Contacts protein L29, and trigger factor when it is bound to the ribosome.</text>
</comment>
<comment type="similarity">
    <text evidence="1">Belongs to the universal ribosomal protein uL23 family.</text>
</comment>
<feature type="chain" id="PRO_1000068088" description="Large ribosomal subunit protein uL23">
    <location>
        <begin position="1"/>
        <end position="95"/>
    </location>
</feature>
<accession>Q03PV9</accession>
<reference key="1">
    <citation type="journal article" date="2006" name="Proc. Natl. Acad. Sci. U.S.A.">
        <title>Comparative genomics of the lactic acid bacteria.</title>
        <authorList>
            <person name="Makarova K.S."/>
            <person name="Slesarev A."/>
            <person name="Wolf Y.I."/>
            <person name="Sorokin A."/>
            <person name="Mirkin B."/>
            <person name="Koonin E.V."/>
            <person name="Pavlov A."/>
            <person name="Pavlova N."/>
            <person name="Karamychev V."/>
            <person name="Polouchine N."/>
            <person name="Shakhova V."/>
            <person name="Grigoriev I."/>
            <person name="Lou Y."/>
            <person name="Rohksar D."/>
            <person name="Lucas S."/>
            <person name="Huang K."/>
            <person name="Goodstein D.M."/>
            <person name="Hawkins T."/>
            <person name="Plengvidhya V."/>
            <person name="Welker D."/>
            <person name="Hughes J."/>
            <person name="Goh Y."/>
            <person name="Benson A."/>
            <person name="Baldwin K."/>
            <person name="Lee J.-H."/>
            <person name="Diaz-Muniz I."/>
            <person name="Dosti B."/>
            <person name="Smeianov V."/>
            <person name="Wechter W."/>
            <person name="Barabote R."/>
            <person name="Lorca G."/>
            <person name="Altermann E."/>
            <person name="Barrangou R."/>
            <person name="Ganesan B."/>
            <person name="Xie Y."/>
            <person name="Rawsthorne H."/>
            <person name="Tamir D."/>
            <person name="Parker C."/>
            <person name="Breidt F."/>
            <person name="Broadbent J.R."/>
            <person name="Hutkins R."/>
            <person name="O'Sullivan D."/>
            <person name="Steele J."/>
            <person name="Unlu G."/>
            <person name="Saier M.H. Jr."/>
            <person name="Klaenhammer T."/>
            <person name="Richardson P."/>
            <person name="Kozyavkin S."/>
            <person name="Weimer B.C."/>
            <person name="Mills D.A."/>
        </authorList>
    </citation>
    <scope>NUCLEOTIDE SEQUENCE [LARGE SCALE GENOMIC DNA]</scope>
    <source>
        <strain>ATCC 367 / BCRC 12310 / CIP 105137 / JCM 1170 / LMG 11437 / NCIMB 947 / NCTC 947</strain>
    </source>
</reference>
<proteinExistence type="inferred from homology"/>
<protein>
    <recommendedName>
        <fullName evidence="1">Large ribosomal subunit protein uL23</fullName>
    </recommendedName>
    <alternativeName>
        <fullName evidence="2">50S ribosomal protein L23</fullName>
    </alternativeName>
</protein>
<keyword id="KW-1185">Reference proteome</keyword>
<keyword id="KW-0687">Ribonucleoprotein</keyword>
<keyword id="KW-0689">Ribosomal protein</keyword>
<keyword id="KW-0694">RNA-binding</keyword>
<keyword id="KW-0699">rRNA-binding</keyword>
<sequence length="95" mass="11051">MESRDIILRPVVTEATMATMDDKRYTFDVDVRATKTQVKHAIEDIFDVKVVKVNVMNLKGKKKRQGRYEGYTKKRRKAIVSLSADSKEIKLFNEE</sequence>
<gene>
    <name evidence="1" type="primary">rplW</name>
    <name type="ordered locus">LVIS_1688</name>
</gene>